<reference key="1">
    <citation type="journal article" date="2004" name="Proc. Natl. Acad. Sci. U.S.A.">
        <title>Genome sequence of the deep-sea gamma-proteobacterium Idiomarina loihiensis reveals amino acid fermentation as a source of carbon and energy.</title>
        <authorList>
            <person name="Hou S."/>
            <person name="Saw J.H."/>
            <person name="Lee K.S."/>
            <person name="Freitas T.A."/>
            <person name="Belisle C."/>
            <person name="Kawarabayasi Y."/>
            <person name="Donachie S.P."/>
            <person name="Pikina A."/>
            <person name="Galperin M.Y."/>
            <person name="Koonin E.V."/>
            <person name="Makarova K.S."/>
            <person name="Omelchenko M.V."/>
            <person name="Sorokin A."/>
            <person name="Wolf Y.I."/>
            <person name="Li Q.X."/>
            <person name="Keum Y.S."/>
            <person name="Campbell S."/>
            <person name="Denery J."/>
            <person name="Aizawa S."/>
            <person name="Shibata S."/>
            <person name="Malahoff A."/>
            <person name="Alam M."/>
        </authorList>
    </citation>
    <scope>NUCLEOTIDE SEQUENCE [LARGE SCALE GENOMIC DNA]</scope>
    <source>
        <strain>ATCC BAA-735 / DSM 15497 / L2-TR</strain>
    </source>
</reference>
<accession>Q5QTZ0</accession>
<name>TRUB_IDILO</name>
<evidence type="ECO:0000255" key="1">
    <source>
        <dbReference type="HAMAP-Rule" id="MF_01080"/>
    </source>
</evidence>
<proteinExistence type="inferred from homology"/>
<feature type="chain" id="PRO_0000121846" description="tRNA pseudouridine synthase B">
    <location>
        <begin position="1"/>
        <end position="310"/>
    </location>
</feature>
<feature type="active site" description="Nucleophile" evidence="1">
    <location>
        <position position="49"/>
    </location>
</feature>
<keyword id="KW-0413">Isomerase</keyword>
<keyword id="KW-1185">Reference proteome</keyword>
<keyword id="KW-0819">tRNA processing</keyword>
<sequence>MSKARLRKGRALTGVVLLNKPQGMSSNHALQRVKRLYNAQKAGHTGALDPLATGILPVCLGEATKFSQYLLDADKAYRVEATLGVRTTTSDAEGEVVEEKPVAVDTAKVADAIKQFIGEQDQSPSIYSALKHEGRPLYYYARQGIEVPKKTRTITVHSIELLNIQDNKVTLQVSCSKGTYIRTLVDDLGQLLGCGAHVSMLHRNAVADIAEAAMVTLEQLETLAEEGYEGLDALLHPADLLLGQLPEVTVTQAQTRDFLHGQPIPLPEQNGNDAEEWRVATENSLFLGVARVKNAELWPRRVIAREHVDL</sequence>
<protein>
    <recommendedName>
        <fullName evidence="1">tRNA pseudouridine synthase B</fullName>
        <ecNumber evidence="1">5.4.99.25</ecNumber>
    </recommendedName>
    <alternativeName>
        <fullName evidence="1">tRNA pseudouridine(55) synthase</fullName>
        <shortName evidence="1">Psi55 synthase</shortName>
    </alternativeName>
    <alternativeName>
        <fullName evidence="1">tRNA pseudouridylate synthase</fullName>
    </alternativeName>
    <alternativeName>
        <fullName evidence="1">tRNA-uridine isomerase</fullName>
    </alternativeName>
</protein>
<comment type="function">
    <text evidence="1">Responsible for synthesis of pseudouridine from uracil-55 in the psi GC loop of transfer RNAs.</text>
</comment>
<comment type="catalytic activity">
    <reaction evidence="1">
        <text>uridine(55) in tRNA = pseudouridine(55) in tRNA</text>
        <dbReference type="Rhea" id="RHEA:42532"/>
        <dbReference type="Rhea" id="RHEA-COMP:10101"/>
        <dbReference type="Rhea" id="RHEA-COMP:10102"/>
        <dbReference type="ChEBI" id="CHEBI:65314"/>
        <dbReference type="ChEBI" id="CHEBI:65315"/>
        <dbReference type="EC" id="5.4.99.25"/>
    </reaction>
</comment>
<comment type="similarity">
    <text evidence="1">Belongs to the pseudouridine synthase TruB family. Type 1 subfamily.</text>
</comment>
<organism>
    <name type="scientific">Idiomarina loihiensis (strain ATCC BAA-735 / DSM 15497 / L2-TR)</name>
    <dbReference type="NCBI Taxonomy" id="283942"/>
    <lineage>
        <taxon>Bacteria</taxon>
        <taxon>Pseudomonadati</taxon>
        <taxon>Pseudomonadota</taxon>
        <taxon>Gammaproteobacteria</taxon>
        <taxon>Alteromonadales</taxon>
        <taxon>Idiomarinaceae</taxon>
        <taxon>Idiomarina</taxon>
    </lineage>
</organism>
<dbReference type="EC" id="5.4.99.25" evidence="1"/>
<dbReference type="EMBL" id="AE017340">
    <property type="protein sequence ID" value="AAV81806.1"/>
    <property type="molecule type" value="Genomic_DNA"/>
</dbReference>
<dbReference type="RefSeq" id="WP_011234217.1">
    <property type="nucleotide sequence ID" value="NC_006512.1"/>
</dbReference>
<dbReference type="SMR" id="Q5QTZ0"/>
<dbReference type="STRING" id="283942.IL0966"/>
<dbReference type="GeneID" id="41336126"/>
<dbReference type="KEGG" id="ilo:IL0966"/>
<dbReference type="eggNOG" id="COG0130">
    <property type="taxonomic scope" value="Bacteria"/>
</dbReference>
<dbReference type="HOGENOM" id="CLU_032087_0_3_6"/>
<dbReference type="OrthoDB" id="9802309at2"/>
<dbReference type="Proteomes" id="UP000001171">
    <property type="component" value="Chromosome"/>
</dbReference>
<dbReference type="GO" id="GO:0003723">
    <property type="term" value="F:RNA binding"/>
    <property type="evidence" value="ECO:0007669"/>
    <property type="project" value="InterPro"/>
</dbReference>
<dbReference type="GO" id="GO:0160148">
    <property type="term" value="F:tRNA pseudouridine(55) synthase activity"/>
    <property type="evidence" value="ECO:0007669"/>
    <property type="project" value="UniProtKB-EC"/>
</dbReference>
<dbReference type="GO" id="GO:1990481">
    <property type="term" value="P:mRNA pseudouridine synthesis"/>
    <property type="evidence" value="ECO:0007669"/>
    <property type="project" value="TreeGrafter"/>
</dbReference>
<dbReference type="GO" id="GO:0031119">
    <property type="term" value="P:tRNA pseudouridine synthesis"/>
    <property type="evidence" value="ECO:0007669"/>
    <property type="project" value="UniProtKB-UniRule"/>
</dbReference>
<dbReference type="CDD" id="cd02573">
    <property type="entry name" value="PseudoU_synth_EcTruB"/>
    <property type="match status" value="1"/>
</dbReference>
<dbReference type="CDD" id="cd21152">
    <property type="entry name" value="PUA_TruB_bacterial"/>
    <property type="match status" value="1"/>
</dbReference>
<dbReference type="Gene3D" id="3.30.2350.10">
    <property type="entry name" value="Pseudouridine synthase"/>
    <property type="match status" value="1"/>
</dbReference>
<dbReference type="Gene3D" id="2.30.130.10">
    <property type="entry name" value="PUA domain"/>
    <property type="match status" value="1"/>
</dbReference>
<dbReference type="HAMAP" id="MF_01080">
    <property type="entry name" value="TruB_bact"/>
    <property type="match status" value="1"/>
</dbReference>
<dbReference type="InterPro" id="IPR020103">
    <property type="entry name" value="PsdUridine_synth_cat_dom_sf"/>
</dbReference>
<dbReference type="InterPro" id="IPR002501">
    <property type="entry name" value="PsdUridine_synth_N"/>
</dbReference>
<dbReference type="InterPro" id="IPR015947">
    <property type="entry name" value="PUA-like_sf"/>
</dbReference>
<dbReference type="InterPro" id="IPR036974">
    <property type="entry name" value="PUA_sf"/>
</dbReference>
<dbReference type="InterPro" id="IPR014780">
    <property type="entry name" value="tRNA_psdUridine_synth_TruB"/>
</dbReference>
<dbReference type="InterPro" id="IPR015240">
    <property type="entry name" value="tRNA_sdUridine_synth_fam1_C"/>
</dbReference>
<dbReference type="InterPro" id="IPR032819">
    <property type="entry name" value="TruB_C"/>
</dbReference>
<dbReference type="NCBIfam" id="TIGR00431">
    <property type="entry name" value="TruB"/>
    <property type="match status" value="1"/>
</dbReference>
<dbReference type="PANTHER" id="PTHR13767:SF2">
    <property type="entry name" value="PSEUDOURIDYLATE SYNTHASE TRUB1"/>
    <property type="match status" value="1"/>
</dbReference>
<dbReference type="PANTHER" id="PTHR13767">
    <property type="entry name" value="TRNA-PSEUDOURIDINE SYNTHASE"/>
    <property type="match status" value="1"/>
</dbReference>
<dbReference type="Pfam" id="PF09157">
    <property type="entry name" value="TruB-C_2"/>
    <property type="match status" value="1"/>
</dbReference>
<dbReference type="Pfam" id="PF16198">
    <property type="entry name" value="TruB_C_2"/>
    <property type="match status" value="1"/>
</dbReference>
<dbReference type="Pfam" id="PF01509">
    <property type="entry name" value="TruB_N"/>
    <property type="match status" value="1"/>
</dbReference>
<dbReference type="SUPFAM" id="SSF55120">
    <property type="entry name" value="Pseudouridine synthase"/>
    <property type="match status" value="1"/>
</dbReference>
<dbReference type="SUPFAM" id="SSF88697">
    <property type="entry name" value="PUA domain-like"/>
    <property type="match status" value="1"/>
</dbReference>
<gene>
    <name evidence="1" type="primary">truB</name>
    <name type="ordered locus">IL0966</name>
</gene>